<accession>Q86HW7</accession>
<accession>Q551K9</accession>
<name>NTF2_DICDI</name>
<keyword id="KW-0963">Cytoplasm</keyword>
<keyword id="KW-0472">Membrane</keyword>
<keyword id="KW-0509">mRNA transport</keyword>
<keyword id="KW-0906">Nuclear pore complex</keyword>
<keyword id="KW-0539">Nucleus</keyword>
<keyword id="KW-0653">Protein transport</keyword>
<keyword id="KW-1185">Reference proteome</keyword>
<keyword id="KW-0811">Translocation</keyword>
<keyword id="KW-0813">Transport</keyword>
<feature type="chain" id="PRO_0000327780" description="Nuclear transport factor 2">
    <location>
        <begin position="1"/>
        <end position="127"/>
    </location>
</feature>
<feature type="domain" description="NTF2" evidence="3">
    <location>
        <begin position="11"/>
        <end position="124"/>
    </location>
</feature>
<sequence length="127" mass="14317">MQSVDPQVVGVGKQFVEHYYGIFDSNRAGLTQIYQQQTTLTWEGKFLSGADAIVKHIVELPFQQTNRKINSIDCQQTYQPGIMITVTGTLIIDGEAKNQLKFVQVFNLASNNGSFLLINDFFRLVLD</sequence>
<protein>
    <recommendedName>
        <fullName evidence="4">Nuclear transport factor 2</fullName>
        <shortName>NTF-2</shortName>
    </recommendedName>
</protein>
<evidence type="ECO:0000250" key="1">
    <source>
        <dbReference type="UniProtKB" id="P61970"/>
    </source>
</evidence>
<evidence type="ECO:0000250" key="2">
    <source>
        <dbReference type="UniProtKB" id="P61972"/>
    </source>
</evidence>
<evidence type="ECO:0000255" key="3">
    <source>
        <dbReference type="PROSITE-ProRule" id="PRU00137"/>
    </source>
</evidence>
<evidence type="ECO:0000305" key="4"/>
<proteinExistence type="evidence at protein level"/>
<comment type="function">
    <text evidence="1">Mediates the import of GDP-bound RAN from the cytoplasm into the nucleus which is essential for the function of RAN in cargo receptor-mediated nucleocytoplasmic transport. Thereby, plays indirectly a more general role in cargo receptor-mediated nucleocytoplasmic transport. Interacts with GDP-bound RAN in the cytosol, recruits it to the nuclear pore complex via its interaction with nucleoporins and promotes its nuclear import.</text>
</comment>
<comment type="subcellular location">
    <subcellularLocation>
        <location evidence="1">Cytoplasm</location>
        <location evidence="1">Cytosol</location>
    </subcellularLocation>
    <subcellularLocation>
        <location evidence="2">Nucleus outer membrane</location>
    </subcellularLocation>
    <subcellularLocation>
        <location evidence="2">Nucleus</location>
        <location evidence="2">Nuclear pore complex</location>
    </subcellularLocation>
    <subcellularLocation>
        <location evidence="2">Nucleus inner membrane</location>
    </subcellularLocation>
    <subcellularLocation>
        <location evidence="1">Nucleus</location>
        <location evidence="1">Nucleoplasm</location>
    </subcellularLocation>
    <text evidence="1">At steady state it is essentially nucleoplasmic, enriched in nucleoplasmic foci.</text>
</comment>
<reference key="1">
    <citation type="journal article" date="2002" name="Nature">
        <title>Sequence and analysis of chromosome 2 of Dictyostelium discoideum.</title>
        <authorList>
            <person name="Gloeckner G."/>
            <person name="Eichinger L."/>
            <person name="Szafranski K."/>
            <person name="Pachebat J.A."/>
            <person name="Bankier A.T."/>
            <person name="Dear P.H."/>
            <person name="Lehmann R."/>
            <person name="Baumgart C."/>
            <person name="Parra G."/>
            <person name="Abril J.F."/>
            <person name="Guigo R."/>
            <person name="Kumpf K."/>
            <person name="Tunggal B."/>
            <person name="Cox E.C."/>
            <person name="Quail M.A."/>
            <person name="Platzer M."/>
            <person name="Rosenthal A."/>
            <person name="Noegel A.A."/>
        </authorList>
    </citation>
    <scope>NUCLEOTIDE SEQUENCE [LARGE SCALE GENOMIC DNA]</scope>
    <source>
        <strain>AX4</strain>
    </source>
</reference>
<reference key="2">
    <citation type="journal article" date="2005" name="Nature">
        <title>The genome of the social amoeba Dictyostelium discoideum.</title>
        <authorList>
            <person name="Eichinger L."/>
            <person name="Pachebat J.A."/>
            <person name="Gloeckner G."/>
            <person name="Rajandream M.A."/>
            <person name="Sucgang R."/>
            <person name="Berriman M."/>
            <person name="Song J."/>
            <person name="Olsen R."/>
            <person name="Szafranski K."/>
            <person name="Xu Q."/>
            <person name="Tunggal B."/>
            <person name="Kummerfeld S."/>
            <person name="Madera M."/>
            <person name="Konfortov B.A."/>
            <person name="Rivero F."/>
            <person name="Bankier A.T."/>
            <person name="Lehmann R."/>
            <person name="Hamlin N."/>
            <person name="Davies R."/>
            <person name="Gaudet P."/>
            <person name="Fey P."/>
            <person name="Pilcher K."/>
            <person name="Chen G."/>
            <person name="Saunders D."/>
            <person name="Sodergren E.J."/>
            <person name="Davis P."/>
            <person name="Kerhornou A."/>
            <person name="Nie X."/>
            <person name="Hall N."/>
            <person name="Anjard C."/>
            <person name="Hemphill L."/>
            <person name="Bason N."/>
            <person name="Farbrother P."/>
            <person name="Desany B."/>
            <person name="Just E."/>
            <person name="Morio T."/>
            <person name="Rost R."/>
            <person name="Churcher C.M."/>
            <person name="Cooper J."/>
            <person name="Haydock S."/>
            <person name="van Driessche N."/>
            <person name="Cronin A."/>
            <person name="Goodhead I."/>
            <person name="Muzny D.M."/>
            <person name="Mourier T."/>
            <person name="Pain A."/>
            <person name="Lu M."/>
            <person name="Harper D."/>
            <person name="Lindsay R."/>
            <person name="Hauser H."/>
            <person name="James K.D."/>
            <person name="Quiles M."/>
            <person name="Madan Babu M."/>
            <person name="Saito T."/>
            <person name="Buchrieser C."/>
            <person name="Wardroper A."/>
            <person name="Felder M."/>
            <person name="Thangavelu M."/>
            <person name="Johnson D."/>
            <person name="Knights A."/>
            <person name="Loulseged H."/>
            <person name="Mungall K.L."/>
            <person name="Oliver K."/>
            <person name="Price C."/>
            <person name="Quail M.A."/>
            <person name="Urushihara H."/>
            <person name="Hernandez J."/>
            <person name="Rabbinowitsch E."/>
            <person name="Steffen D."/>
            <person name="Sanders M."/>
            <person name="Ma J."/>
            <person name="Kohara Y."/>
            <person name="Sharp S."/>
            <person name="Simmonds M.N."/>
            <person name="Spiegler S."/>
            <person name="Tivey A."/>
            <person name="Sugano S."/>
            <person name="White B."/>
            <person name="Walker D."/>
            <person name="Woodward J.R."/>
            <person name="Winckler T."/>
            <person name="Tanaka Y."/>
            <person name="Shaulsky G."/>
            <person name="Schleicher M."/>
            <person name="Weinstock G.M."/>
            <person name="Rosenthal A."/>
            <person name="Cox E.C."/>
            <person name="Chisholm R.L."/>
            <person name="Gibbs R.A."/>
            <person name="Loomis W.F."/>
            <person name="Platzer M."/>
            <person name="Kay R.R."/>
            <person name="Williams J.G."/>
            <person name="Dear P.H."/>
            <person name="Noegel A.A."/>
            <person name="Barrell B.G."/>
            <person name="Kuspa A."/>
        </authorList>
    </citation>
    <scope>NUCLEOTIDE SEQUENCE [LARGE SCALE GENOMIC DNA]</scope>
    <source>
        <strain>AX4</strain>
    </source>
</reference>
<reference key="3">
    <citation type="journal article" date="2006" name="J. Proteome Res.">
        <title>Identification of novel centrosomal proteins in Dictyostelium discoideum by comparative proteomic approaches.</title>
        <authorList>
            <person name="Reinders Y."/>
            <person name="Schulz I."/>
            <person name="Graef R."/>
            <person name="Sickmann A."/>
        </authorList>
    </citation>
    <scope>IDENTIFICATION BY MASS SPECTROMETRY [LARGE SCALE ANALYSIS]</scope>
</reference>
<gene>
    <name evidence="1" type="primary">nutf2</name>
    <name type="ORF">DDB_G0276425</name>
</gene>
<organism>
    <name type="scientific">Dictyostelium discoideum</name>
    <name type="common">Social amoeba</name>
    <dbReference type="NCBI Taxonomy" id="44689"/>
    <lineage>
        <taxon>Eukaryota</taxon>
        <taxon>Amoebozoa</taxon>
        <taxon>Evosea</taxon>
        <taxon>Eumycetozoa</taxon>
        <taxon>Dictyostelia</taxon>
        <taxon>Dictyosteliales</taxon>
        <taxon>Dictyosteliaceae</taxon>
        <taxon>Dictyostelium</taxon>
    </lineage>
</organism>
<dbReference type="EMBL" id="AAFI02000015">
    <property type="protein sequence ID" value="EAL69166.1"/>
    <property type="molecule type" value="Genomic_DNA"/>
</dbReference>
<dbReference type="RefSeq" id="XP_643125.1">
    <property type="nucleotide sequence ID" value="XM_638033.1"/>
</dbReference>
<dbReference type="SMR" id="Q86HW7"/>
<dbReference type="FunCoup" id="Q86HW7">
    <property type="interactions" value="1145"/>
</dbReference>
<dbReference type="IntAct" id="Q86HW7">
    <property type="interactions" value="1"/>
</dbReference>
<dbReference type="STRING" id="44689.Q86HW7"/>
<dbReference type="PaxDb" id="44689-DDB0233957"/>
<dbReference type="EnsemblProtists" id="EAL69166">
    <property type="protein sequence ID" value="EAL69166"/>
    <property type="gene ID" value="DDB_G0276425"/>
</dbReference>
<dbReference type="GeneID" id="8620530"/>
<dbReference type="KEGG" id="ddi:DDB_G0276425"/>
<dbReference type="dictyBase" id="DDB_G0276425">
    <property type="gene designation" value="nutf2"/>
</dbReference>
<dbReference type="VEuPathDB" id="AmoebaDB:DDB_G0276425"/>
<dbReference type="eggNOG" id="KOG2104">
    <property type="taxonomic scope" value="Eukaryota"/>
</dbReference>
<dbReference type="HOGENOM" id="CLU_131642_0_0_1"/>
<dbReference type="InParanoid" id="Q86HW7"/>
<dbReference type="OMA" id="QFVEYYY"/>
<dbReference type="PhylomeDB" id="Q86HW7"/>
<dbReference type="PRO" id="PR:Q86HW7"/>
<dbReference type="Proteomes" id="UP000002195">
    <property type="component" value="Chromosome 2"/>
</dbReference>
<dbReference type="GO" id="GO:0005829">
    <property type="term" value="C:cytosol"/>
    <property type="evidence" value="ECO:0000250"/>
    <property type="project" value="UniProtKB"/>
</dbReference>
<dbReference type="GO" id="GO:0005635">
    <property type="term" value="C:nuclear envelope"/>
    <property type="evidence" value="ECO:0000250"/>
    <property type="project" value="dictyBase"/>
</dbReference>
<dbReference type="GO" id="GO:0005637">
    <property type="term" value="C:nuclear inner membrane"/>
    <property type="evidence" value="ECO:0007669"/>
    <property type="project" value="UniProtKB-SubCell"/>
</dbReference>
<dbReference type="GO" id="GO:0005640">
    <property type="term" value="C:nuclear outer membrane"/>
    <property type="evidence" value="ECO:0007669"/>
    <property type="project" value="UniProtKB-SubCell"/>
</dbReference>
<dbReference type="GO" id="GO:0044613">
    <property type="term" value="C:nuclear pore central transport channel"/>
    <property type="evidence" value="ECO:0000318"/>
    <property type="project" value="GO_Central"/>
</dbReference>
<dbReference type="GO" id="GO:0005654">
    <property type="term" value="C:nucleoplasm"/>
    <property type="evidence" value="ECO:0000250"/>
    <property type="project" value="UniProtKB"/>
</dbReference>
<dbReference type="GO" id="GO:0031267">
    <property type="term" value="F:small GTPase binding"/>
    <property type="evidence" value="ECO:0000250"/>
    <property type="project" value="dictyBase"/>
</dbReference>
<dbReference type="GO" id="GO:0017056">
    <property type="term" value="F:structural constituent of nuclear pore"/>
    <property type="evidence" value="ECO:0000250"/>
    <property type="project" value="GO_Central"/>
</dbReference>
<dbReference type="GO" id="GO:0051028">
    <property type="term" value="P:mRNA transport"/>
    <property type="evidence" value="ECO:0007669"/>
    <property type="project" value="UniProtKB-KW"/>
</dbReference>
<dbReference type="GO" id="GO:0006913">
    <property type="term" value="P:nucleocytoplasmic transport"/>
    <property type="evidence" value="ECO:0000318"/>
    <property type="project" value="GO_Central"/>
</dbReference>
<dbReference type="GO" id="GO:0006606">
    <property type="term" value="P:protein import into nucleus"/>
    <property type="evidence" value="ECO:0000250"/>
    <property type="project" value="dictyBase"/>
</dbReference>
<dbReference type="CDD" id="cd00780">
    <property type="entry name" value="NTF2"/>
    <property type="match status" value="1"/>
</dbReference>
<dbReference type="FunFam" id="3.10.450.50:FF:000005">
    <property type="entry name" value="Nuclear transport factor 2"/>
    <property type="match status" value="1"/>
</dbReference>
<dbReference type="Gene3D" id="3.10.450.50">
    <property type="match status" value="1"/>
</dbReference>
<dbReference type="InterPro" id="IPR045875">
    <property type="entry name" value="NTF2"/>
</dbReference>
<dbReference type="InterPro" id="IPR032710">
    <property type="entry name" value="NTF2-like_dom_sf"/>
</dbReference>
<dbReference type="InterPro" id="IPR002075">
    <property type="entry name" value="NTF2_dom"/>
</dbReference>
<dbReference type="InterPro" id="IPR018222">
    <property type="entry name" value="Nuclear_transport_factor_2_euk"/>
</dbReference>
<dbReference type="PANTHER" id="PTHR12612">
    <property type="entry name" value="NUCLEAR TRANSPORT FACTOR 2"/>
    <property type="match status" value="1"/>
</dbReference>
<dbReference type="Pfam" id="PF02136">
    <property type="entry name" value="NTF2"/>
    <property type="match status" value="1"/>
</dbReference>
<dbReference type="SUPFAM" id="SSF54427">
    <property type="entry name" value="NTF2-like"/>
    <property type="match status" value="1"/>
</dbReference>
<dbReference type="PROSITE" id="PS50177">
    <property type="entry name" value="NTF2_DOMAIN"/>
    <property type="match status" value="1"/>
</dbReference>